<keyword id="KW-0548">Nucleotidyltransferase</keyword>
<keyword id="KW-1185">Reference proteome</keyword>
<keyword id="KW-0694">RNA-binding</keyword>
<keyword id="KW-0698">rRNA processing</keyword>
<keyword id="KW-0808">Transferase</keyword>
<keyword id="KW-0819">tRNA processing</keyword>
<keyword id="KW-0820">tRNA-binding</keyword>
<organism>
    <name type="scientific">Brucella anthropi (strain ATCC 49188 / DSM 6882 / CCUG 24695 / JCM 21032 / LMG 3331 / NBRC 15819 / NCTC 12168 / Alc 37)</name>
    <name type="common">Ochrobactrum anthropi</name>
    <dbReference type="NCBI Taxonomy" id="439375"/>
    <lineage>
        <taxon>Bacteria</taxon>
        <taxon>Pseudomonadati</taxon>
        <taxon>Pseudomonadota</taxon>
        <taxon>Alphaproteobacteria</taxon>
        <taxon>Hyphomicrobiales</taxon>
        <taxon>Brucellaceae</taxon>
        <taxon>Brucella/Ochrobactrum group</taxon>
        <taxon>Brucella</taxon>
    </lineage>
</organism>
<reference key="1">
    <citation type="journal article" date="2011" name="J. Bacteriol.">
        <title>Genome of Ochrobactrum anthropi ATCC 49188 T, a versatile opportunistic pathogen and symbiont of several eukaryotic hosts.</title>
        <authorList>
            <person name="Chain P.S."/>
            <person name="Lang D.M."/>
            <person name="Comerci D.J."/>
            <person name="Malfatti S.A."/>
            <person name="Vergez L.M."/>
            <person name="Shin M."/>
            <person name="Ugalde R.A."/>
            <person name="Garcia E."/>
            <person name="Tolmasky M.E."/>
        </authorList>
    </citation>
    <scope>NUCLEOTIDE SEQUENCE [LARGE SCALE GENOMIC DNA]</scope>
    <source>
        <strain>ATCC 49188 / DSM 6882 / CCUG 24695 / JCM 21032 / LMG 3331 / NBRC 15819 / NCTC 12168 / Alc 37</strain>
    </source>
</reference>
<sequence>MRPSKRAADEMRAVSFERGISKHAEGSCLVKFGDTHVLCTASLEEKVPGWMRNTGKGWVTAEYGMLPRSTGDRMRREAAAGKQGGRTQEIQRLIGRSLRAVVDMQALGEVQITVDCDVIQADGGTRTAAITGGWVALHECLRWMEARQMVRVEKVLKDHIAAISCGIYEGEPVLDLDYAEDSVAETDSNFVMTGKGGIVEIQGTAEGAPFSEEEFANLMKLARGGIDRLVSLQKMAVA</sequence>
<feature type="chain" id="PRO_1000024845" description="Ribonuclease PH">
    <location>
        <begin position="1"/>
        <end position="238"/>
    </location>
</feature>
<feature type="binding site" evidence="1">
    <location>
        <position position="86"/>
    </location>
    <ligand>
        <name>phosphate</name>
        <dbReference type="ChEBI" id="CHEBI:43474"/>
        <note>substrate</note>
    </ligand>
</feature>
<feature type="binding site" evidence="1">
    <location>
        <begin position="124"/>
        <end position="126"/>
    </location>
    <ligand>
        <name>phosphate</name>
        <dbReference type="ChEBI" id="CHEBI:43474"/>
        <note>substrate</note>
    </ligand>
</feature>
<protein>
    <recommendedName>
        <fullName evidence="1">Ribonuclease PH</fullName>
        <shortName evidence="1">RNase PH</shortName>
        <ecNumber evidence="1">2.7.7.56</ecNumber>
    </recommendedName>
    <alternativeName>
        <fullName evidence="1">tRNA nucleotidyltransferase</fullName>
    </alternativeName>
</protein>
<evidence type="ECO:0000255" key="1">
    <source>
        <dbReference type="HAMAP-Rule" id="MF_00564"/>
    </source>
</evidence>
<name>RNPH_BRUA4</name>
<accession>A6WVA9</accession>
<proteinExistence type="inferred from homology"/>
<gene>
    <name evidence="1" type="primary">rph</name>
    <name type="ordered locus">Oant_0182</name>
</gene>
<dbReference type="EC" id="2.7.7.56" evidence="1"/>
<dbReference type="EMBL" id="CP000758">
    <property type="protein sequence ID" value="ABS12913.1"/>
    <property type="molecule type" value="Genomic_DNA"/>
</dbReference>
<dbReference type="RefSeq" id="WP_010658015.1">
    <property type="nucleotide sequence ID" value="NC_009667.1"/>
</dbReference>
<dbReference type="SMR" id="A6WVA9"/>
<dbReference type="STRING" id="439375.Oant_0182"/>
<dbReference type="GeneID" id="61316406"/>
<dbReference type="KEGG" id="oan:Oant_0182"/>
<dbReference type="eggNOG" id="COG0689">
    <property type="taxonomic scope" value="Bacteria"/>
</dbReference>
<dbReference type="HOGENOM" id="CLU_050858_0_0_5"/>
<dbReference type="Proteomes" id="UP000002301">
    <property type="component" value="Chromosome 1"/>
</dbReference>
<dbReference type="GO" id="GO:0000175">
    <property type="term" value="F:3'-5'-RNA exonuclease activity"/>
    <property type="evidence" value="ECO:0007669"/>
    <property type="project" value="UniProtKB-UniRule"/>
</dbReference>
<dbReference type="GO" id="GO:0000049">
    <property type="term" value="F:tRNA binding"/>
    <property type="evidence" value="ECO:0007669"/>
    <property type="project" value="UniProtKB-UniRule"/>
</dbReference>
<dbReference type="GO" id="GO:0009022">
    <property type="term" value="F:tRNA nucleotidyltransferase activity"/>
    <property type="evidence" value="ECO:0007669"/>
    <property type="project" value="UniProtKB-UniRule"/>
</dbReference>
<dbReference type="GO" id="GO:0016075">
    <property type="term" value="P:rRNA catabolic process"/>
    <property type="evidence" value="ECO:0007669"/>
    <property type="project" value="UniProtKB-UniRule"/>
</dbReference>
<dbReference type="GO" id="GO:0006364">
    <property type="term" value="P:rRNA processing"/>
    <property type="evidence" value="ECO:0007669"/>
    <property type="project" value="UniProtKB-KW"/>
</dbReference>
<dbReference type="GO" id="GO:0008033">
    <property type="term" value="P:tRNA processing"/>
    <property type="evidence" value="ECO:0007669"/>
    <property type="project" value="UniProtKB-UniRule"/>
</dbReference>
<dbReference type="CDD" id="cd11362">
    <property type="entry name" value="RNase_PH_bact"/>
    <property type="match status" value="1"/>
</dbReference>
<dbReference type="FunFam" id="3.30.230.70:FF:000003">
    <property type="entry name" value="Ribonuclease PH"/>
    <property type="match status" value="1"/>
</dbReference>
<dbReference type="Gene3D" id="3.30.230.70">
    <property type="entry name" value="GHMP Kinase, N-terminal domain"/>
    <property type="match status" value="1"/>
</dbReference>
<dbReference type="HAMAP" id="MF_00564">
    <property type="entry name" value="RNase_PH"/>
    <property type="match status" value="1"/>
</dbReference>
<dbReference type="InterPro" id="IPR001247">
    <property type="entry name" value="ExoRNase_PH_dom1"/>
</dbReference>
<dbReference type="InterPro" id="IPR015847">
    <property type="entry name" value="ExoRNase_PH_dom2"/>
</dbReference>
<dbReference type="InterPro" id="IPR036345">
    <property type="entry name" value="ExoRNase_PH_dom2_sf"/>
</dbReference>
<dbReference type="InterPro" id="IPR027408">
    <property type="entry name" value="PNPase/RNase_PH_dom_sf"/>
</dbReference>
<dbReference type="InterPro" id="IPR020568">
    <property type="entry name" value="Ribosomal_Su5_D2-typ_SF"/>
</dbReference>
<dbReference type="InterPro" id="IPR050080">
    <property type="entry name" value="RNase_PH"/>
</dbReference>
<dbReference type="InterPro" id="IPR002381">
    <property type="entry name" value="RNase_PH_bac-type"/>
</dbReference>
<dbReference type="InterPro" id="IPR018336">
    <property type="entry name" value="RNase_PH_CS"/>
</dbReference>
<dbReference type="NCBIfam" id="TIGR01966">
    <property type="entry name" value="RNasePH"/>
    <property type="match status" value="1"/>
</dbReference>
<dbReference type="PANTHER" id="PTHR11953">
    <property type="entry name" value="EXOSOME COMPLEX COMPONENT"/>
    <property type="match status" value="1"/>
</dbReference>
<dbReference type="PANTHER" id="PTHR11953:SF0">
    <property type="entry name" value="EXOSOME COMPLEX COMPONENT RRP41"/>
    <property type="match status" value="1"/>
</dbReference>
<dbReference type="Pfam" id="PF01138">
    <property type="entry name" value="RNase_PH"/>
    <property type="match status" value="1"/>
</dbReference>
<dbReference type="Pfam" id="PF03725">
    <property type="entry name" value="RNase_PH_C"/>
    <property type="match status" value="1"/>
</dbReference>
<dbReference type="SUPFAM" id="SSF55666">
    <property type="entry name" value="Ribonuclease PH domain 2-like"/>
    <property type="match status" value="1"/>
</dbReference>
<dbReference type="SUPFAM" id="SSF54211">
    <property type="entry name" value="Ribosomal protein S5 domain 2-like"/>
    <property type="match status" value="1"/>
</dbReference>
<dbReference type="PROSITE" id="PS01277">
    <property type="entry name" value="RIBONUCLEASE_PH"/>
    <property type="match status" value="1"/>
</dbReference>
<comment type="function">
    <text evidence="1">Phosphorolytic 3'-5' exoribonuclease that plays an important role in tRNA 3'-end maturation. Removes nucleotide residues following the 3'-CCA terminus of tRNAs; can also add nucleotides to the ends of RNA molecules by using nucleoside diphosphates as substrates, but this may not be physiologically important. Probably plays a role in initiation of 16S rRNA degradation (leading to ribosome degradation) during starvation.</text>
</comment>
<comment type="catalytic activity">
    <reaction evidence="1">
        <text>tRNA(n+1) + phosphate = tRNA(n) + a ribonucleoside 5'-diphosphate</text>
        <dbReference type="Rhea" id="RHEA:10628"/>
        <dbReference type="Rhea" id="RHEA-COMP:17343"/>
        <dbReference type="Rhea" id="RHEA-COMP:17344"/>
        <dbReference type="ChEBI" id="CHEBI:43474"/>
        <dbReference type="ChEBI" id="CHEBI:57930"/>
        <dbReference type="ChEBI" id="CHEBI:173114"/>
        <dbReference type="EC" id="2.7.7.56"/>
    </reaction>
</comment>
<comment type="subunit">
    <text evidence="1">Homohexameric ring arranged as a trimer of dimers.</text>
</comment>
<comment type="similarity">
    <text evidence="1">Belongs to the RNase PH family.</text>
</comment>